<gene>
    <name type="primary">RNQ1</name>
    <name type="ordered locus">YCL028W</name>
    <name type="ORF">YCL181</name>
    <name type="ORF">YCL28W</name>
</gene>
<feature type="chain" id="PRO_0000097390" description="[PIN+] prion protein RNQ1">
    <location>
        <begin position="1"/>
        <end position="405"/>
    </location>
</feature>
<feature type="region of interest" description="Disordered" evidence="1">
    <location>
        <begin position="149"/>
        <end position="172"/>
    </location>
</feature>
<feature type="region of interest" description="Prion domain (PrD)">
    <location>
        <begin position="153"/>
        <end position="402"/>
    </location>
</feature>
<feature type="region of interest" description="Disordered" evidence="1">
    <location>
        <begin position="185"/>
        <end position="405"/>
    </location>
</feature>
<feature type="compositionally biased region" description="Gly residues" evidence="1">
    <location>
        <begin position="155"/>
        <end position="171"/>
    </location>
</feature>
<feature type="compositionally biased region" description="Low complexity" evidence="1">
    <location>
        <begin position="185"/>
        <end position="261"/>
    </location>
</feature>
<feature type="compositionally biased region" description="Low complexity" evidence="1">
    <location>
        <begin position="283"/>
        <end position="353"/>
    </location>
</feature>
<feature type="compositionally biased region" description="Polar residues" evidence="1">
    <location>
        <begin position="358"/>
        <end position="368"/>
    </location>
</feature>
<feature type="compositionally biased region" description="Polar residues" evidence="1">
    <location>
        <begin position="375"/>
        <end position="385"/>
    </location>
</feature>
<feature type="compositionally biased region" description="Low complexity" evidence="1">
    <location>
        <begin position="386"/>
        <end position="405"/>
    </location>
</feature>
<feature type="modified residue" description="Phosphoserine" evidence="10">
    <location>
        <position position="143"/>
    </location>
</feature>
<feature type="cross-link" description="Glycyl lysine isopeptide (Lys-Gly) (interchain with G-Cter in ubiquitin)" evidence="11">
    <location>
        <position position="5"/>
    </location>
</feature>
<feature type="cross-link" description="Glycyl lysine isopeptide (Lys-Gly) (interchain with G-Cter in ubiquitin)" evidence="11">
    <location>
        <position position="84"/>
    </location>
</feature>
<feature type="sequence variant" description="In strain: SCI7.2/b, SCI11.5/a and SCI11.5/c.">
    <location>
        <begin position="166"/>
        <end position="169"/>
    </location>
</feature>
<feature type="sequence variant" description="In strain: SCI7.2/a, SCI7.2/d, SCI11.5/b and SCI11.5/d.">
    <location>
        <begin position="171"/>
        <end position="172"/>
    </location>
</feature>
<feature type="sequence variant" description="In strain: SCI7.2/b, SCI7.2/d and SCI11.5/c.">
    <location>
        <begin position="289"/>
        <end position="299"/>
    </location>
</feature>
<feature type="sequence variant" description="In strain: SCI9.">
    <location>
        <begin position="293"/>
        <end position="303"/>
    </location>
</feature>
<feature type="sequence variant" description="In strain: SCI3, SCI4, SCI7.2/a, SCI7.2/b, SCI7.2/d, SCI11.5/a, SCI11.5/b, SCI11.5/c and SCI11.5/d.">
    <original>Q</original>
    <variation>H</variation>
    <location>
        <position position="360"/>
    </location>
</feature>
<feature type="sequence variant" description="In strain: SCI7.2/b, SCI7.2/d and SCI11.5/c.">
    <original>P</original>
    <variation>PQHNGQQQSNEYGRP</variation>
    <location>
        <position position="372"/>
    </location>
</feature>
<feature type="sequence variant" description="In strain: SCI7.2/b,SCI7.2/d and SCI11.5/c.">
    <original>Q</original>
    <variation>H</variation>
    <location>
        <position position="383"/>
    </location>
</feature>
<feature type="sequence variant" description="In strain: SCI4.">
    <original>F</original>
    <variation>L</variation>
    <location>
        <position position="387"/>
    </location>
</feature>
<feature type="sequence conflict" description="In Ref. 1; AAA34615." evidence="6" ref="1">
    <original>A</original>
    <variation>T</variation>
    <location>
        <position position="181"/>
    </location>
</feature>
<comment type="function">
    <text evidence="2 3">Transferable epigenetic modifier which forms a prion responsible for the non-Mendelian trait [PIN+]. The native function of the soluble protein is unknown.</text>
</comment>
<comment type="interaction">
    <interactant intactId="EBI-21708">
        <id>P25367</id>
    </interactant>
    <interactant intactId="EBI-21708">
        <id>P25367</id>
        <label>RNQ1</label>
    </interactant>
    <organismsDiffer>false</organismsDiffer>
    <experiments>6</experiments>
</comment>
<comment type="interaction">
    <interactant intactId="EBI-21708">
        <id>P25367</id>
    </interactant>
    <interactant intactId="EBI-17244">
        <id>P25294</id>
        <label>SIS1</label>
    </interactant>
    <organismsDiffer>false</organismsDiffer>
    <experiments>3</experiments>
</comment>
<comment type="subcellular location">
    <subcellularLocation>
        <location evidence="4">Cytoplasm</location>
    </subcellularLocation>
    <subcellularLocation>
        <location evidence="4">Nucleus</location>
    </subcellularLocation>
</comment>
<comment type="domain">
    <text>The prion domain (PrD) is a Gln/Asn (Q/N)-rich domain, which is unstructured in its native, soluble form, and which forms a parallel in-register beta-sheet in its amyloid form.</text>
</comment>
<comment type="miscellaneous">
    <text evidence="7 8 9">[PIN+], also known as [RNQ+], is the prion form of RNQ1 (PubMed:10678178). [PIN+] is the result of a conformational change of the cellular RNQ1 protein that becomes self-propagating and infectious. This conformational change generates a form of RNQ1 that assembles into amyloid fibrils (PubMed:17097676). [PIN+] promotes de novo [PSI+] formation upon SUP35 overproduction (cross-seeding) (PubMed:11511345). [PIN+] can be cured by GdnHCl and by deletion of the molecular chaperone HSP104, which is required for [PIN+] propagation (PubMed:10678178).</text>
</comment>
<comment type="miscellaneous">
    <text evidence="5">Present with 1140 molecules/cell in log phase SD medium.</text>
</comment>
<comment type="sequence caution" evidence="6">
    <conflict type="frameshift">
        <sequence resource="EMBL-CDS" id="AAA34615"/>
    </conflict>
</comment>
<dbReference type="EMBL" id="M16717">
    <property type="protein sequence ID" value="AAA34615.1"/>
    <property type="status" value="ALT_FRAME"/>
    <property type="molecule type" value="Genomic_DNA"/>
</dbReference>
<dbReference type="EMBL" id="X59720">
    <property type="protein sequence ID" value="CAC42958.1"/>
    <property type="molecule type" value="Genomic_DNA"/>
</dbReference>
<dbReference type="EMBL" id="AY028674">
    <property type="protein sequence ID" value="AAK26208.1"/>
    <property type="molecule type" value="Genomic_DNA"/>
</dbReference>
<dbReference type="EMBL" id="AY028675">
    <property type="protein sequence ID" value="AAK26209.1"/>
    <property type="molecule type" value="Genomic_DNA"/>
</dbReference>
<dbReference type="EMBL" id="AY028676">
    <property type="protein sequence ID" value="AAK26210.1"/>
    <property type="molecule type" value="Genomic_DNA"/>
</dbReference>
<dbReference type="EMBL" id="AY028677">
    <property type="protein sequence ID" value="AAK26211.1"/>
    <property type="molecule type" value="Genomic_DNA"/>
</dbReference>
<dbReference type="EMBL" id="AY028678">
    <property type="protein sequence ID" value="AAK26212.1"/>
    <property type="molecule type" value="Genomic_DNA"/>
</dbReference>
<dbReference type="EMBL" id="AY028679">
    <property type="protein sequence ID" value="AAK26213.1"/>
    <property type="molecule type" value="Genomic_DNA"/>
</dbReference>
<dbReference type="EMBL" id="AY028680">
    <property type="protein sequence ID" value="AAK26214.1"/>
    <property type="molecule type" value="Genomic_DNA"/>
</dbReference>
<dbReference type="EMBL" id="AY028681">
    <property type="protein sequence ID" value="AAK26215.1"/>
    <property type="molecule type" value="Genomic_DNA"/>
</dbReference>
<dbReference type="EMBL" id="AY028682">
    <property type="protein sequence ID" value="AAK26216.1"/>
    <property type="molecule type" value="Genomic_DNA"/>
</dbReference>
<dbReference type="EMBL" id="AY028683">
    <property type="protein sequence ID" value="AAK26217.1"/>
    <property type="molecule type" value="Genomic_DNA"/>
</dbReference>
<dbReference type="EMBL" id="AY028684">
    <property type="protein sequence ID" value="AAK26218.1"/>
    <property type="molecule type" value="Genomic_DNA"/>
</dbReference>
<dbReference type="EMBL" id="AY028685">
    <property type="protein sequence ID" value="AAK26219.1"/>
    <property type="molecule type" value="Genomic_DNA"/>
</dbReference>
<dbReference type="EMBL" id="BK006937">
    <property type="protein sequence ID" value="DAA07456.1"/>
    <property type="molecule type" value="Genomic_DNA"/>
</dbReference>
<dbReference type="PIR" id="S19355">
    <property type="entry name" value="S19355"/>
</dbReference>
<dbReference type="RefSeq" id="NP_009902.2">
    <property type="nucleotide sequence ID" value="NM_001178673.1"/>
</dbReference>
<dbReference type="SMR" id="P25367"/>
<dbReference type="BioGRID" id="30955">
    <property type="interactions" value="109"/>
</dbReference>
<dbReference type="DIP" id="DIP-4323N"/>
<dbReference type="FunCoup" id="P25367">
    <property type="interactions" value="239"/>
</dbReference>
<dbReference type="IntAct" id="P25367">
    <property type="interactions" value="48"/>
</dbReference>
<dbReference type="MINT" id="P25367"/>
<dbReference type="STRING" id="4932.YCL028W"/>
<dbReference type="iPTMnet" id="P25367"/>
<dbReference type="PaxDb" id="4932-YCL028W"/>
<dbReference type="PeptideAtlas" id="P25367"/>
<dbReference type="EnsemblFungi" id="YCL028W_mRNA">
    <property type="protein sequence ID" value="YCL028W"/>
    <property type="gene ID" value="YCL028W"/>
</dbReference>
<dbReference type="GeneID" id="850329"/>
<dbReference type="KEGG" id="sce:YCL028W"/>
<dbReference type="AGR" id="SGD:S000000533"/>
<dbReference type="SGD" id="S000000533">
    <property type="gene designation" value="RNQ1"/>
</dbReference>
<dbReference type="VEuPathDB" id="FungiDB:YCL028W"/>
<dbReference type="eggNOG" id="ENOG502S2FC">
    <property type="taxonomic scope" value="Eukaryota"/>
</dbReference>
<dbReference type="HOGENOM" id="CLU_702391_0_0_1"/>
<dbReference type="InParanoid" id="P25367"/>
<dbReference type="OMA" id="GNDDNKY"/>
<dbReference type="OrthoDB" id="3981262at2759"/>
<dbReference type="BioCyc" id="YEAST:G3O-29289-MONOMER"/>
<dbReference type="BioGRID-ORCS" id="850329">
    <property type="hits" value="6 hits in 10 CRISPR screens"/>
</dbReference>
<dbReference type="CD-CODE" id="A777E0F8">
    <property type="entry name" value="P-body"/>
</dbReference>
<dbReference type="CD-CODE" id="BA10A4D8">
    <property type="entry name" value="Htt inclusion"/>
</dbReference>
<dbReference type="CD-CODE" id="E03F929F">
    <property type="entry name" value="Stress granule"/>
</dbReference>
<dbReference type="PRO" id="PR:P25367"/>
<dbReference type="Proteomes" id="UP000002311">
    <property type="component" value="Chromosome III"/>
</dbReference>
<dbReference type="RNAct" id="P25367">
    <property type="molecule type" value="protein"/>
</dbReference>
<dbReference type="GO" id="GO:0005829">
    <property type="term" value="C:cytosol"/>
    <property type="evidence" value="ECO:0000314"/>
    <property type="project" value="SGD"/>
</dbReference>
<dbReference type="GO" id="GO:0005634">
    <property type="term" value="C:nucleus"/>
    <property type="evidence" value="ECO:0007669"/>
    <property type="project" value="UniProtKB-SubCell"/>
</dbReference>
<dbReference type="GO" id="GO:0042802">
    <property type="term" value="F:identical protein binding"/>
    <property type="evidence" value="ECO:0000353"/>
    <property type="project" value="IntAct"/>
</dbReference>
<organism>
    <name type="scientific">Saccharomyces cerevisiae (strain ATCC 204508 / S288c)</name>
    <name type="common">Baker's yeast</name>
    <dbReference type="NCBI Taxonomy" id="559292"/>
    <lineage>
        <taxon>Eukaryota</taxon>
        <taxon>Fungi</taxon>
        <taxon>Dikarya</taxon>
        <taxon>Ascomycota</taxon>
        <taxon>Saccharomycotina</taxon>
        <taxon>Saccharomycetes</taxon>
        <taxon>Saccharomycetales</taxon>
        <taxon>Saccharomycetaceae</taxon>
        <taxon>Saccharomyces</taxon>
    </lineage>
</organism>
<proteinExistence type="evidence at protein level"/>
<reference key="1">
    <citation type="journal article" date="1987" name="Mol. Cell. Biol.">
        <title>Two genes required for cell fusion during yeast conjugation: evidence for a pheromone-induced surface protein.</title>
        <authorList>
            <person name="Trueheart J."/>
            <person name="Boeke J.D."/>
            <person name="Fink G.R."/>
        </authorList>
    </citation>
    <scope>NUCLEOTIDE SEQUENCE [GENOMIC DNA]</scope>
</reference>
<reference key="2">
    <citation type="journal article" date="1991" name="Yeast">
        <title>The complete sequence of a 11,953 bp fragment from C1G on chromosome III encompasses four new open reading frames.</title>
        <authorList>
            <person name="Rad M.R."/>
            <person name="Luetzenkirchen K."/>
            <person name="Xu G."/>
            <person name="Kleinhans U."/>
            <person name="Hollenberg C.P."/>
        </authorList>
    </citation>
    <scope>NUCLEOTIDE SEQUENCE [GENOMIC DNA]</scope>
</reference>
<reference key="3">
    <citation type="journal article" date="1992" name="Nature">
        <title>The complete DNA sequence of yeast chromosome III.</title>
        <authorList>
            <person name="Oliver S.G."/>
            <person name="van der Aart Q.J.M."/>
            <person name="Agostoni-Carbone M.L."/>
            <person name="Aigle M."/>
            <person name="Alberghina L."/>
            <person name="Alexandraki D."/>
            <person name="Antoine G."/>
            <person name="Anwar R."/>
            <person name="Ballesta J.P.G."/>
            <person name="Benit P."/>
            <person name="Berben G."/>
            <person name="Bergantino E."/>
            <person name="Biteau N."/>
            <person name="Bolle P.-A."/>
            <person name="Bolotin-Fukuhara M."/>
            <person name="Brown A."/>
            <person name="Brown A.J.P."/>
            <person name="Buhler J.-M."/>
            <person name="Carcano C."/>
            <person name="Carignani G."/>
            <person name="Cederberg H."/>
            <person name="Chanet R."/>
            <person name="Contreras R."/>
            <person name="Crouzet M."/>
            <person name="Daignan-Fornier B."/>
            <person name="Defoor E."/>
            <person name="Delgado M.D."/>
            <person name="Demolder J."/>
            <person name="Doira C."/>
            <person name="Dubois E."/>
            <person name="Dujon B."/>
            <person name="Duesterhoeft A."/>
            <person name="Erdmann D."/>
            <person name="Esteban M."/>
            <person name="Fabre F."/>
            <person name="Fairhead C."/>
            <person name="Faye G."/>
            <person name="Feldmann H."/>
            <person name="Fiers W."/>
            <person name="Francingues-Gaillard M.-C."/>
            <person name="Franco L."/>
            <person name="Frontali L."/>
            <person name="Fukuhara H."/>
            <person name="Fuller L.J."/>
            <person name="Galland P."/>
            <person name="Gent M.E."/>
            <person name="Gigot D."/>
            <person name="Gilliquet V."/>
            <person name="Glansdorff N."/>
            <person name="Goffeau A."/>
            <person name="Grenson M."/>
            <person name="Grisanti P."/>
            <person name="Grivell L.A."/>
            <person name="de Haan M."/>
            <person name="Haasemann M."/>
            <person name="Hatat D."/>
            <person name="Hoenicka J."/>
            <person name="Hegemann J.H."/>
            <person name="Herbert C.J."/>
            <person name="Hilger F."/>
            <person name="Hohmann S."/>
            <person name="Hollenberg C.P."/>
            <person name="Huse K."/>
            <person name="Iborra F."/>
            <person name="Indge K.J."/>
            <person name="Isono K."/>
            <person name="Jacq C."/>
            <person name="Jacquet M."/>
            <person name="James C.M."/>
            <person name="Jauniaux J.-C."/>
            <person name="Jia Y."/>
            <person name="Jimenez A."/>
            <person name="Kelly A."/>
            <person name="Kleinhans U."/>
            <person name="Kreisl P."/>
            <person name="Lanfranchi G."/>
            <person name="Lewis C."/>
            <person name="van der Linden C.G."/>
            <person name="Lucchini G."/>
            <person name="Lutzenkirchen K."/>
            <person name="Maat M.J."/>
            <person name="Mallet L."/>
            <person name="Mannhaupt G."/>
            <person name="Martegani E."/>
            <person name="Mathieu A."/>
            <person name="Maurer C.T.C."/>
            <person name="McConnell D."/>
            <person name="McKee R.A."/>
            <person name="Messenguy F."/>
            <person name="Mewes H.-W."/>
            <person name="Molemans F."/>
            <person name="Montague M.A."/>
            <person name="Muzi Falconi M."/>
            <person name="Navas L."/>
            <person name="Newlon C.S."/>
            <person name="Noone D."/>
            <person name="Pallier C."/>
            <person name="Panzeri L."/>
            <person name="Pearson B.M."/>
            <person name="Perea J."/>
            <person name="Philippsen P."/>
            <person name="Pierard A."/>
            <person name="Planta R.J."/>
            <person name="Plevani P."/>
            <person name="Poetsch B."/>
            <person name="Pohl F.M."/>
            <person name="Purnelle B."/>
            <person name="Ramezani Rad M."/>
            <person name="Rasmussen S.W."/>
            <person name="Raynal A."/>
            <person name="Remacha M.A."/>
            <person name="Richterich P."/>
            <person name="Roberts A.B."/>
            <person name="Rodriguez F."/>
            <person name="Sanz E."/>
            <person name="Schaaff-Gerstenschlaeger I."/>
            <person name="Scherens B."/>
            <person name="Schweitzer B."/>
            <person name="Shu Y."/>
            <person name="Skala J."/>
            <person name="Slonimski P.P."/>
            <person name="Sor F."/>
            <person name="Soustelle C."/>
            <person name="Spiegelberg R."/>
            <person name="Stateva L.I."/>
            <person name="Steensma H.Y."/>
            <person name="Steiner S."/>
            <person name="Thierry A."/>
            <person name="Thireos G."/>
            <person name="Tzermia M."/>
            <person name="Urrestarazu L.A."/>
            <person name="Valle G."/>
            <person name="Vetter I."/>
            <person name="van Vliet-Reedijk J.C."/>
            <person name="Voet M."/>
            <person name="Volckaert G."/>
            <person name="Vreken P."/>
            <person name="Wang H."/>
            <person name="Warmington J.R."/>
            <person name="von Wettstein D."/>
            <person name="Wicksteed B.L."/>
            <person name="Wilson C."/>
            <person name="Wurst H."/>
            <person name="Xu G."/>
            <person name="Yoshikawa A."/>
            <person name="Zimmermann F.K."/>
            <person name="Sgouros J.G."/>
        </authorList>
    </citation>
    <scope>NUCLEOTIDE SEQUENCE [LARGE SCALE GENOMIC DNA]</scope>
    <source>
        <strain>ATCC 204508 / S288c</strain>
    </source>
</reference>
<reference key="4">
    <citation type="submission" date="2001-06" db="EMBL/GenBank/DDBJ databases">
        <authorList>
            <person name="Valles G."/>
            <person name="Volckaerts G."/>
        </authorList>
    </citation>
    <scope>SEQUENCE REVISION TO 360</scope>
</reference>
<reference key="5">
    <citation type="journal article" date="2014" name="G3 (Bethesda)">
        <title>The reference genome sequence of Saccharomyces cerevisiae: Then and now.</title>
        <authorList>
            <person name="Engel S.R."/>
            <person name="Dietrich F.S."/>
            <person name="Fisk D.G."/>
            <person name="Binkley G."/>
            <person name="Balakrishnan R."/>
            <person name="Costanzo M.C."/>
            <person name="Dwight S.S."/>
            <person name="Hitz B.C."/>
            <person name="Karra K."/>
            <person name="Nash R.S."/>
            <person name="Weng S."/>
            <person name="Wong E.D."/>
            <person name="Lloyd P."/>
            <person name="Skrzypek M.S."/>
            <person name="Miyasato S.R."/>
            <person name="Simison M."/>
            <person name="Cherry J.M."/>
        </authorList>
    </citation>
    <scope>GENOME REANNOTATION</scope>
    <source>
        <strain>ATCC 204508 / S288c</strain>
    </source>
</reference>
<reference key="6">
    <citation type="journal article" date="2003" name="Mol. Microbiol.">
        <title>Prion protein gene polymorphisms in Saccharomyces cerevisiae.</title>
        <authorList>
            <person name="Resende C.G."/>
            <person name="Outeiro T.F."/>
            <person name="Sands L."/>
            <person name="Lindquist S."/>
            <person name="Tuite M.F."/>
        </authorList>
    </citation>
    <scope>NUCLEOTIDE SEQUENCE [GENOMIC DNA] OF 138-405</scope>
    <source>
        <strain>SCI11.5/a</strain>
        <strain>SCI11.5/b</strain>
        <strain>SCI11.5/c</strain>
        <strain>SCI11.5/d</strain>
        <strain>SCI16</strain>
        <strain>SCI3</strain>
        <strain>SCI4</strain>
        <strain>SCI7.2/a</strain>
        <strain>SCI7.2/b</strain>
        <strain>SCI7.2/d</strain>
        <strain>SCI9</strain>
        <strain>SCI9*</strain>
    </source>
</reference>
<reference key="7">
    <citation type="journal article" date="1997" name="Genetics">
        <title>Genetic and environmental factors affecting the de novo appearance of the [PSI+] prion in Saccharomyces cerevisiae.</title>
        <authorList>
            <person name="Derkatch I.L."/>
            <person name="Bradley M.E."/>
            <person name="Zhou P."/>
            <person name="Chernoff Y.O."/>
            <person name="Liebman S.W."/>
        </authorList>
    </citation>
    <scope>PRION FORMATION</scope>
</reference>
<reference key="8">
    <citation type="journal article" date="2000" name="Mol. Cell">
        <title>Rnq1: an epigenetic modifier of protein function in yeast.</title>
        <authorList>
            <person name="Sondheimer N."/>
            <person name="Lindquist S.L."/>
        </authorList>
    </citation>
    <scope>FUNCTION</scope>
    <scope>IDENTIFICATION AS A PRION</scope>
    <scope>AGGREGATION</scope>
</reference>
<reference key="9">
    <citation type="journal article" date="2001" name="Cell">
        <title>Prions affect the appearance of other prions: the story of [PIN(+)].</title>
        <authorList>
            <person name="Derkatch I.L."/>
            <person name="Bradley M.E."/>
            <person name="Hong J.Y."/>
            <person name="Liebman S.W."/>
        </authorList>
    </citation>
    <scope>FUNCTION</scope>
    <scope>AGGREGATION</scope>
</reference>
<reference key="10">
    <citation type="journal article" date="2003" name="Nature">
        <title>Global analysis of protein localization in budding yeast.</title>
        <authorList>
            <person name="Huh W.-K."/>
            <person name="Falvo J.V."/>
            <person name="Gerke L.C."/>
            <person name="Carroll A.S."/>
            <person name="Howson R.W."/>
            <person name="Weissman J.S."/>
            <person name="O'Shea E.K."/>
        </authorList>
    </citation>
    <scope>SUBCELLULAR LOCATION [LARGE SCALE ANALYSIS]</scope>
</reference>
<reference key="11">
    <citation type="journal article" date="2003" name="Nature">
        <title>Global analysis of protein expression in yeast.</title>
        <authorList>
            <person name="Ghaemmaghami S."/>
            <person name="Huh W.-K."/>
            <person name="Bower K."/>
            <person name="Howson R.W."/>
            <person name="Belle A."/>
            <person name="Dephoure N."/>
            <person name="O'Shea E.K."/>
            <person name="Weissman J.S."/>
        </authorList>
    </citation>
    <scope>LEVEL OF PROTEIN EXPRESSION [LARGE SCALE ANALYSIS]</scope>
</reference>
<reference key="12">
    <citation type="journal article" date="2007" name="J. Mol. Biol.">
        <title>'Prion-proof' for [PIN+]: infection with in vitro-made amyloid aggregates of Rnq1p-(132-405) induces [PIN+].</title>
        <authorList>
            <person name="Patel B.K."/>
            <person name="Liebman S.W."/>
        </authorList>
    </citation>
    <scope>PRION PROPAGATION</scope>
</reference>
<reference key="13">
    <citation type="journal article" date="2008" name="Mol. Cell. Proteomics">
        <title>A multidimensional chromatography technology for in-depth phosphoproteome analysis.</title>
        <authorList>
            <person name="Albuquerque C.P."/>
            <person name="Smolka M.B."/>
            <person name="Payne S.H."/>
            <person name="Bafna V."/>
            <person name="Eng J."/>
            <person name="Zhou H."/>
        </authorList>
    </citation>
    <scope>PHOSPHORYLATION [LARGE SCALE ANALYSIS] AT SER-143</scope>
    <scope>IDENTIFICATION BY MASS SPECTROMETRY [LARGE SCALE ANALYSIS]</scope>
</reference>
<reference key="14">
    <citation type="journal article" date="2012" name="Proteomics">
        <title>Sites of ubiquitin attachment in Saccharomyces cerevisiae.</title>
        <authorList>
            <person name="Starita L.M."/>
            <person name="Lo R.S."/>
            <person name="Eng J.K."/>
            <person name="von Haller P.D."/>
            <person name="Fields S."/>
        </authorList>
    </citation>
    <scope>UBIQUITINATION [LARGE SCALE ANALYSIS] AT LYS-5 AND LYS-84</scope>
    <scope>IDENTIFICATION BY MASS SPECTROMETRY [LARGE SCALE ANALYSIS]</scope>
</reference>
<reference key="15">
    <citation type="journal article" date="2008" name="Proc. Natl. Acad. Sci. U.S.A.">
        <title>Amyloid of Rnq1p, the basis of the [PIN+] prion, has a parallel in-register beta-sheet structure.</title>
        <authorList>
            <person name="Wickner R.B."/>
            <person name="Dyda F."/>
            <person name="Tycko R."/>
        </authorList>
    </citation>
    <scope>STRUCTURE BY NMR OF 153-405</scope>
</reference>
<protein>
    <recommendedName>
        <fullName>[PIN+] prion protein RNQ1</fullName>
    </recommendedName>
    <alternativeName>
        <fullName>Rich in asparagine and glutamine protein 1</fullName>
    </alternativeName>
</protein>
<name>RNQ1_YEAST</name>
<evidence type="ECO:0000256" key="1">
    <source>
        <dbReference type="SAM" id="MobiDB-lite"/>
    </source>
</evidence>
<evidence type="ECO:0000269" key="2">
    <source>
    </source>
</evidence>
<evidence type="ECO:0000269" key="3">
    <source>
    </source>
</evidence>
<evidence type="ECO:0000269" key="4">
    <source>
    </source>
</evidence>
<evidence type="ECO:0000269" key="5">
    <source>
    </source>
</evidence>
<evidence type="ECO:0000305" key="6"/>
<evidence type="ECO:0000305" key="7">
    <source>
    </source>
</evidence>
<evidence type="ECO:0000305" key="8">
    <source>
    </source>
</evidence>
<evidence type="ECO:0000305" key="9">
    <source>
    </source>
</evidence>
<evidence type="ECO:0007744" key="10">
    <source>
    </source>
</evidence>
<evidence type="ECO:0007744" key="11">
    <source>
    </source>
</evidence>
<keyword id="KW-0034">Amyloid</keyword>
<keyword id="KW-0963">Cytoplasm</keyword>
<keyword id="KW-1017">Isopeptide bond</keyword>
<keyword id="KW-0539">Nucleus</keyword>
<keyword id="KW-0597">Phosphoprotein</keyword>
<keyword id="KW-0640">Prion</keyword>
<keyword id="KW-1185">Reference proteome</keyword>
<keyword id="KW-0832">Ubl conjugation</keyword>
<accession>P25367</accession>
<accession>D6VQY7</accession>
<accession>Q8NKJ9</accession>
<accession>Q8TF94</accession>
<accession>Q8TFA2</accession>
<accession>Q8TFC8</accession>
<accession>Q8TFP4</accession>
<accession>Q8TFP5</accession>
<accession>Q8TFP6</accession>
<accession>Q8TFP7</accession>
<accession>Q8TFP8</accession>
<sequence>MDTDKLISEAESHFSQGNHAEAVAKLTSAAQSNPNDEQMSTIESLIQKIAGYVMDNRSGGSDASQDRAAGGGSSFMNTLMADSKGSSQTQLGKLALLATVMTHSSNKGSSNRGFDVGTVMSMLSGSGGGSQSMGASGLAALASQFFKSGNNSQGQGQGQGQGQGQGQGQGQGSFTALASLASSFMNSNNNNQQGQNQSSGGSSFGALASMASSFMHSNNNQNSNNSQQGYNQSYQNGNQNSQGYNNQQYQGGNGGYQQQQGQSGGAFSSLASMAQSYLGGGQTQSNQQQYNQQGQNNQQQYQQQGQNYQHQQQGQQQQQGHSSSFSALASMASSYLGNNSNSNSSYGGQQQANEYGRPQQNGQQQSNEYGRPQYGGNQNSNGQHESFNFSGNFSQQNNNGNQNRY</sequence>